<feature type="chain" id="PRO_0000029981" description="S-adenosylmethionine decarboxylase beta chain" evidence="1">
    <location>
        <begin position="1"/>
        <end position="99"/>
    </location>
</feature>
<feature type="chain" id="PRO_0000029982" description="S-adenosylmethionine decarboxylase alpha chain" evidence="1">
    <location>
        <begin position="100"/>
        <end position="392"/>
    </location>
</feature>
<feature type="active site" evidence="1">
    <location>
        <position position="43"/>
    </location>
</feature>
<feature type="active site" evidence="1">
    <location>
        <position position="46"/>
    </location>
</feature>
<feature type="active site" description="Schiff-base intermediate with substrate; via pyruvic acid" evidence="1">
    <location>
        <position position="100"/>
    </location>
</feature>
<feature type="active site" description="Proton donor; for catalytic activity" evidence="1">
    <location>
        <position position="114"/>
    </location>
</feature>
<feature type="active site" description="Proton acceptor; for processing activity" evidence="1">
    <location>
        <position position="264"/>
    </location>
</feature>
<feature type="active site" description="Proton acceptor; for processing activity" evidence="1">
    <location>
        <position position="277"/>
    </location>
</feature>
<feature type="site" description="Cleavage (non-hydrolytic); by autolysis" evidence="1">
    <location>
        <begin position="99"/>
        <end position="100"/>
    </location>
</feature>
<feature type="modified residue" description="Pyruvic acid (Ser); by autocatalysis" evidence="1">
    <location>
        <position position="100"/>
    </location>
</feature>
<dbReference type="EC" id="4.1.1.50"/>
<dbReference type="EMBL" id="AF255345">
    <property type="protein sequence ID" value="AAF67754.1"/>
    <property type="molecule type" value="mRNA"/>
</dbReference>
<dbReference type="SMR" id="Q9NGA0"/>
<dbReference type="VEuPathDB" id="TriTrypDB:LINF_300036700"/>
<dbReference type="eggNOG" id="KOG0788">
    <property type="taxonomic scope" value="Eukaryota"/>
</dbReference>
<dbReference type="UniPathway" id="UPA00331">
    <property type="reaction ID" value="UER00451"/>
</dbReference>
<dbReference type="GO" id="GO:0005829">
    <property type="term" value="C:cytosol"/>
    <property type="evidence" value="ECO:0007669"/>
    <property type="project" value="TreeGrafter"/>
</dbReference>
<dbReference type="GO" id="GO:0004014">
    <property type="term" value="F:adenosylmethionine decarboxylase activity"/>
    <property type="evidence" value="ECO:0007669"/>
    <property type="project" value="UniProtKB-EC"/>
</dbReference>
<dbReference type="GO" id="GO:0008295">
    <property type="term" value="P:spermidine biosynthetic process"/>
    <property type="evidence" value="ECO:0007669"/>
    <property type="project" value="UniProtKB-KW"/>
</dbReference>
<dbReference type="GO" id="GO:0006597">
    <property type="term" value="P:spermine biosynthetic process"/>
    <property type="evidence" value="ECO:0007669"/>
    <property type="project" value="InterPro"/>
</dbReference>
<dbReference type="FunFam" id="3.60.90.10:FF:000009">
    <property type="entry name" value="S-adenosylmethionine decarboxylase proenzyme"/>
    <property type="match status" value="1"/>
</dbReference>
<dbReference type="Gene3D" id="3.30.360.50">
    <property type="entry name" value="S-adenosylmethionine decarboxylase"/>
    <property type="match status" value="1"/>
</dbReference>
<dbReference type="Gene3D" id="3.60.90.10">
    <property type="entry name" value="S-adenosylmethionine decarboxylase"/>
    <property type="match status" value="1"/>
</dbReference>
<dbReference type="InterPro" id="IPR048283">
    <property type="entry name" value="AdoMetDC-like"/>
</dbReference>
<dbReference type="InterPro" id="IPR001985">
    <property type="entry name" value="S-AdoMet_decarboxylase_euk"/>
</dbReference>
<dbReference type="InterPro" id="IPR016067">
    <property type="entry name" value="S-AdoMet_deCO2ase_core"/>
</dbReference>
<dbReference type="InterPro" id="IPR018166">
    <property type="entry name" value="S-AdoMet_deCO2ase_CS"/>
</dbReference>
<dbReference type="PANTHER" id="PTHR11570">
    <property type="entry name" value="S-ADENOSYLMETHIONINE DECARBOXYLASE"/>
    <property type="match status" value="1"/>
</dbReference>
<dbReference type="PANTHER" id="PTHR11570:SF0">
    <property type="entry name" value="S-ADENOSYLMETHIONINE DECARBOXYLASE PROENZYME"/>
    <property type="match status" value="1"/>
</dbReference>
<dbReference type="Pfam" id="PF01536">
    <property type="entry name" value="SAM_decarbox"/>
    <property type="match status" value="1"/>
</dbReference>
<dbReference type="PIRSF" id="PIRSF001355">
    <property type="entry name" value="S-AdenosylMet_decarboxylase"/>
    <property type="match status" value="1"/>
</dbReference>
<dbReference type="SUPFAM" id="SSF56276">
    <property type="entry name" value="S-adenosylmethionine decarboxylase"/>
    <property type="match status" value="1"/>
</dbReference>
<dbReference type="PROSITE" id="PS01336">
    <property type="entry name" value="ADOMETDC"/>
    <property type="match status" value="1"/>
</dbReference>
<proteinExistence type="evidence at transcript level"/>
<sequence>MKHGNYSLATMNVCSNTTKDPLTLMAMWGSMKGYNPEQGFSFEGPEKRLEVILRCTLETHVDGLRSLDDSVWSGVVGSLNAQIVSRESNEYINSYVLTESSLFVMKNRIILITCGTTTLLNSIPNILEAISAVRGELEWVSFMHKNYSFPWMQKGPHTSLADEFATLKQHFPTGKPYIFGPVDSDHYFLFCYDDIIRPCSSEDDTQLSMTMYGLDKEQTKHWFSDRFISTSAETAAIRAATHLDRVVDGTWTLHDLQFEPCGYSINAIRDEEYQTMHITPEDHCSFASYETNSRAANYSDRMKKVLGVFRPQRFTVIVFLDPESPVGKAYNEGKGIGVEPEYYPEYNLLHRTTNEFAPGYVAMKINYVRTAAVEETVTAVGGAEAGAEGGPD</sequence>
<organism>
    <name type="scientific">Leishmania infantum</name>
    <dbReference type="NCBI Taxonomy" id="5671"/>
    <lineage>
        <taxon>Eukaryota</taxon>
        <taxon>Discoba</taxon>
        <taxon>Euglenozoa</taxon>
        <taxon>Kinetoplastea</taxon>
        <taxon>Metakinetoplastina</taxon>
        <taxon>Trypanosomatida</taxon>
        <taxon>Trypanosomatidae</taxon>
        <taxon>Leishmaniinae</taxon>
        <taxon>Leishmania</taxon>
    </lineage>
</organism>
<keyword id="KW-0068">Autocatalytic cleavage</keyword>
<keyword id="KW-0210">Decarboxylase</keyword>
<keyword id="KW-0456">Lyase</keyword>
<keyword id="KW-0620">Polyamine biosynthesis</keyword>
<keyword id="KW-0670">Pyruvate</keyword>
<keyword id="KW-0949">S-adenosyl-L-methionine</keyword>
<keyword id="KW-0704">Schiff base</keyword>
<keyword id="KW-0745">Spermidine biosynthesis</keyword>
<keyword id="KW-0865">Zymogen</keyword>
<reference key="1">
    <citation type="submission" date="2000-04" db="EMBL/GenBank/DDBJ databases">
        <title>Leishmania infantum S-adenosylmethionine decarboxylase.</title>
        <authorList>
            <person name="Taladriz S."/>
            <person name="Hanke T."/>
            <person name="Ramiro M.J."/>
            <person name="Larraga V."/>
        </authorList>
    </citation>
    <scope>NUCLEOTIDE SEQUENCE [MRNA]</scope>
</reference>
<name>DCAM_LEIIN</name>
<protein>
    <recommendedName>
        <fullName>S-adenosylmethionine decarboxylase proenzyme</fullName>
        <shortName>AdoMetDC</shortName>
        <shortName>SAMDC</shortName>
        <ecNumber>4.1.1.50</ecNumber>
    </recommendedName>
    <component>
        <recommendedName>
            <fullName>S-adenosylmethionine decarboxylase alpha chain</fullName>
        </recommendedName>
    </component>
    <component>
        <recommendedName>
            <fullName>S-adenosylmethionine decarboxylase beta chain</fullName>
        </recommendedName>
    </component>
</protein>
<evidence type="ECO:0000250" key="1"/>
<evidence type="ECO:0000305" key="2"/>
<accession>Q9NGA0</accession>
<comment type="catalytic activity">
    <reaction>
        <text>S-adenosyl-L-methionine + H(+) = S-adenosyl 3-(methylsulfanyl)propylamine + CO2</text>
        <dbReference type="Rhea" id="RHEA:15981"/>
        <dbReference type="ChEBI" id="CHEBI:15378"/>
        <dbReference type="ChEBI" id="CHEBI:16526"/>
        <dbReference type="ChEBI" id="CHEBI:57443"/>
        <dbReference type="ChEBI" id="CHEBI:59789"/>
        <dbReference type="EC" id="4.1.1.50"/>
    </reaction>
</comment>
<comment type="cofactor">
    <cofactor evidence="1">
        <name>pyruvate</name>
        <dbReference type="ChEBI" id="CHEBI:15361"/>
    </cofactor>
    <text evidence="1">Binds 1 pyruvoyl group covalently per subunit.</text>
</comment>
<comment type="pathway">
    <text>Amine and polyamine biosynthesis; S-adenosylmethioninamine biosynthesis; S-adenosylmethioninamine from S-adenosyl-L-methionine: step 1/1.</text>
</comment>
<comment type="PTM">
    <text evidence="1">Is synthesized initially as an inactive proenzyme. Formation of the active enzyme involves a self-maturation process in which the active site pyruvoyl group is generated from an internal serine residue via an autocatalytic post-translational modification. Two non-identical subunits are generated from the proenzyme in this reaction, and the pyruvate is formed at the N-terminus of the alpha chain, which is derived from the carboxyl end of the proenzyme. The post-translation cleavage follows an unusual pathway, termed non-hydrolytic serinolysis, in which the side chain hydroxyl group of the serine supplies its oxygen atom to form the C-terminus of the beta chain, while the remainder of the serine residue undergoes an oxidative deamination to produce ammonia and the pyruvoyl group blocking the N-terminus of the alpha chain (By similarity).</text>
</comment>
<comment type="similarity">
    <text evidence="2">Belongs to the eukaryotic AdoMetDC family.</text>
</comment>